<keyword id="KW-0963">Cytoplasm</keyword>
<keyword id="KW-0489">Methyltransferase</keyword>
<keyword id="KW-0949">S-adenosyl-L-methionine</keyword>
<keyword id="KW-0808">Transferase</keyword>
<protein>
    <recommendedName>
        <fullName>Protein-L-isoaspartate O-methyltransferase</fullName>
        <ecNumber>2.1.1.77</ecNumber>
    </recommendedName>
    <alternativeName>
        <fullName>L-isoaspartyl protein carboxyl methyltransferase</fullName>
    </alternativeName>
    <alternativeName>
        <fullName>Protein L-isoaspartyl methyltransferase</fullName>
    </alternativeName>
    <alternativeName>
        <fullName>Protein-beta-aspartate methyltransferase</fullName>
        <shortName>PIMT</shortName>
    </alternativeName>
</protein>
<dbReference type="EC" id="2.1.1.77"/>
<dbReference type="EMBL" id="AE001439">
    <property type="protein sequence ID" value="AAD06603.1"/>
    <property type="molecule type" value="Genomic_DNA"/>
</dbReference>
<dbReference type="PIR" id="D71858">
    <property type="entry name" value="D71858"/>
</dbReference>
<dbReference type="RefSeq" id="WP_001084537.1">
    <property type="nucleotide sequence ID" value="NC_000921.1"/>
</dbReference>
<dbReference type="SMR" id="Q9ZKC2"/>
<dbReference type="KEGG" id="hpj:jhp_1017"/>
<dbReference type="PATRIC" id="fig|85963.30.peg.1573"/>
<dbReference type="eggNOG" id="COG2518">
    <property type="taxonomic scope" value="Bacteria"/>
</dbReference>
<dbReference type="Proteomes" id="UP000000804">
    <property type="component" value="Chromosome"/>
</dbReference>
<dbReference type="GO" id="GO:0005737">
    <property type="term" value="C:cytoplasm"/>
    <property type="evidence" value="ECO:0007669"/>
    <property type="project" value="UniProtKB-SubCell"/>
</dbReference>
<dbReference type="GO" id="GO:0004719">
    <property type="term" value="F:protein-L-isoaspartate (D-aspartate) O-methyltransferase activity"/>
    <property type="evidence" value="ECO:0007669"/>
    <property type="project" value="UniProtKB-UniRule"/>
</dbReference>
<dbReference type="GO" id="GO:0032259">
    <property type="term" value="P:methylation"/>
    <property type="evidence" value="ECO:0007669"/>
    <property type="project" value="UniProtKB-KW"/>
</dbReference>
<dbReference type="GO" id="GO:0036211">
    <property type="term" value="P:protein modification process"/>
    <property type="evidence" value="ECO:0007669"/>
    <property type="project" value="UniProtKB-UniRule"/>
</dbReference>
<dbReference type="GO" id="GO:0030091">
    <property type="term" value="P:protein repair"/>
    <property type="evidence" value="ECO:0007669"/>
    <property type="project" value="UniProtKB-UniRule"/>
</dbReference>
<dbReference type="CDD" id="cd02440">
    <property type="entry name" value="AdoMet_MTases"/>
    <property type="match status" value="1"/>
</dbReference>
<dbReference type="FunFam" id="3.40.50.150:FF:000010">
    <property type="entry name" value="Protein-L-isoaspartate O-methyltransferase"/>
    <property type="match status" value="1"/>
</dbReference>
<dbReference type="Gene3D" id="3.40.50.150">
    <property type="entry name" value="Vaccinia Virus protein VP39"/>
    <property type="match status" value="1"/>
</dbReference>
<dbReference type="HAMAP" id="MF_00090">
    <property type="entry name" value="PIMT"/>
    <property type="match status" value="1"/>
</dbReference>
<dbReference type="InterPro" id="IPR000682">
    <property type="entry name" value="PCMT"/>
</dbReference>
<dbReference type="InterPro" id="IPR029063">
    <property type="entry name" value="SAM-dependent_MTases_sf"/>
</dbReference>
<dbReference type="NCBIfam" id="TIGR00080">
    <property type="entry name" value="pimt"/>
    <property type="match status" value="1"/>
</dbReference>
<dbReference type="NCBIfam" id="NF001453">
    <property type="entry name" value="PRK00312.1"/>
    <property type="match status" value="1"/>
</dbReference>
<dbReference type="PANTHER" id="PTHR11579">
    <property type="entry name" value="PROTEIN-L-ISOASPARTATE O-METHYLTRANSFERASE"/>
    <property type="match status" value="1"/>
</dbReference>
<dbReference type="PANTHER" id="PTHR11579:SF0">
    <property type="entry name" value="PROTEIN-L-ISOASPARTATE(D-ASPARTATE) O-METHYLTRANSFERASE"/>
    <property type="match status" value="1"/>
</dbReference>
<dbReference type="Pfam" id="PF01135">
    <property type="entry name" value="PCMT"/>
    <property type="match status" value="1"/>
</dbReference>
<dbReference type="SUPFAM" id="SSF53335">
    <property type="entry name" value="S-adenosyl-L-methionine-dependent methyltransferases"/>
    <property type="match status" value="1"/>
</dbReference>
<dbReference type="PROSITE" id="PS01279">
    <property type="entry name" value="PCMT"/>
    <property type="match status" value="1"/>
</dbReference>
<name>PIMT_HELPJ</name>
<reference key="1">
    <citation type="journal article" date="1999" name="Nature">
        <title>Genomic sequence comparison of two unrelated isolates of the human gastric pathogen Helicobacter pylori.</title>
        <authorList>
            <person name="Alm R.A."/>
            <person name="Ling L.-S.L."/>
            <person name="Moir D.T."/>
            <person name="King B.L."/>
            <person name="Brown E.D."/>
            <person name="Doig P.C."/>
            <person name="Smith D.R."/>
            <person name="Noonan B."/>
            <person name="Guild B.C."/>
            <person name="deJonge B.L."/>
            <person name="Carmel G."/>
            <person name="Tummino P.J."/>
            <person name="Caruso A."/>
            <person name="Uria-Nickelsen M."/>
            <person name="Mills D.M."/>
            <person name="Ives C."/>
            <person name="Gibson R."/>
            <person name="Merberg D."/>
            <person name="Mills S.D."/>
            <person name="Jiang Q."/>
            <person name="Taylor D.E."/>
            <person name="Vovis G.F."/>
            <person name="Trust T.J."/>
        </authorList>
    </citation>
    <scope>NUCLEOTIDE SEQUENCE [LARGE SCALE GENOMIC DNA]</scope>
    <source>
        <strain>J99 / ATCC 700824</strain>
    </source>
</reference>
<accession>Q9ZKC2</accession>
<gene>
    <name type="primary">pcm</name>
    <name type="ordered locus">jhp_1017</name>
</gene>
<feature type="chain" id="PRO_0000111893" description="Protein-L-isoaspartate O-methyltransferase">
    <location>
        <begin position="1"/>
        <end position="209"/>
    </location>
</feature>
<feature type="active site" evidence="1">
    <location>
        <position position="59"/>
    </location>
</feature>
<comment type="function">
    <text evidence="1">Catalyzes the methyl esterification of L-isoaspartyl residues in peptides and proteins that result from spontaneous decomposition of normal L-aspartyl and L-asparaginyl residues. It plays a role in the repair and/or degradation of damaged proteins (By similarity).</text>
</comment>
<comment type="catalytic activity">
    <reaction>
        <text>[protein]-L-isoaspartate + S-adenosyl-L-methionine = [protein]-L-isoaspartate alpha-methyl ester + S-adenosyl-L-homocysteine</text>
        <dbReference type="Rhea" id="RHEA:12705"/>
        <dbReference type="Rhea" id="RHEA-COMP:12143"/>
        <dbReference type="Rhea" id="RHEA-COMP:12144"/>
        <dbReference type="ChEBI" id="CHEBI:57856"/>
        <dbReference type="ChEBI" id="CHEBI:59789"/>
        <dbReference type="ChEBI" id="CHEBI:90596"/>
        <dbReference type="ChEBI" id="CHEBI:90598"/>
        <dbReference type="EC" id="2.1.1.77"/>
    </reaction>
</comment>
<comment type="subunit">
    <text evidence="1">Monomer.</text>
</comment>
<comment type="subcellular location">
    <subcellularLocation>
        <location evidence="1">Cytoplasm</location>
    </subcellularLocation>
</comment>
<comment type="similarity">
    <text evidence="2">Belongs to the methyltransferase superfamily. L-isoaspartyl/D-aspartyl protein methyltransferase family.</text>
</comment>
<evidence type="ECO:0000250" key="1"/>
<evidence type="ECO:0000305" key="2"/>
<organism>
    <name type="scientific">Helicobacter pylori (strain J99 / ATCC 700824)</name>
    <name type="common">Campylobacter pylori J99</name>
    <dbReference type="NCBI Taxonomy" id="85963"/>
    <lineage>
        <taxon>Bacteria</taxon>
        <taxon>Pseudomonadati</taxon>
        <taxon>Campylobacterota</taxon>
        <taxon>Epsilonproteobacteria</taxon>
        <taxon>Campylobacterales</taxon>
        <taxon>Helicobacteraceae</taxon>
        <taxon>Helicobacter</taxon>
    </lineage>
</organism>
<proteinExistence type="inferred from homology"/>
<sequence length="209" mass="23919">MNSIKNHLMCEEIHKRFNLHPKVREAMESIEREVFVPAPFKHFAYTLNALSMQAQQYISSPLTVAKMTQYLEIDHVDSVLEIGCGSGYQAAVLSQIFRRVFSIERIESLYIEARLRLKTLGLDNVHVKFADGNKGWERYAPYDRILFSACAKNIPQALIDQLEEGGILVAPIQENNEQVIKRFVKQNNALRVQKVLEKCLFVPVVDGVQ</sequence>